<protein>
    <recommendedName>
        <fullName evidence="1">tRNA uridine 5-carboxymethylaminomethyl modification enzyme MnmG</fullName>
    </recommendedName>
    <alternativeName>
        <fullName evidence="1">Glucose-inhibited division protein A</fullName>
    </alternativeName>
</protein>
<accession>Q6GD93</accession>
<evidence type="ECO:0000255" key="1">
    <source>
        <dbReference type="HAMAP-Rule" id="MF_00129"/>
    </source>
</evidence>
<gene>
    <name evidence="1" type="primary">mnmG</name>
    <name evidence="1" type="synonym">gidA</name>
    <name type="ordered locus">SAR2797</name>
</gene>
<name>MNMG_STAAR</name>
<organism>
    <name type="scientific">Staphylococcus aureus (strain MRSA252)</name>
    <dbReference type="NCBI Taxonomy" id="282458"/>
    <lineage>
        <taxon>Bacteria</taxon>
        <taxon>Bacillati</taxon>
        <taxon>Bacillota</taxon>
        <taxon>Bacilli</taxon>
        <taxon>Bacillales</taxon>
        <taxon>Staphylococcaceae</taxon>
        <taxon>Staphylococcus</taxon>
    </lineage>
</organism>
<feature type="chain" id="PRO_0000117176" description="tRNA uridine 5-carboxymethylaminomethyl modification enzyme MnmG">
    <location>
        <begin position="1"/>
        <end position="625"/>
    </location>
</feature>
<feature type="binding site" evidence="1">
    <location>
        <begin position="11"/>
        <end position="16"/>
    </location>
    <ligand>
        <name>FAD</name>
        <dbReference type="ChEBI" id="CHEBI:57692"/>
    </ligand>
</feature>
<feature type="binding site" evidence="1">
    <location>
        <position position="123"/>
    </location>
    <ligand>
        <name>FAD</name>
        <dbReference type="ChEBI" id="CHEBI:57692"/>
    </ligand>
</feature>
<feature type="binding site" evidence="1">
    <location>
        <position position="178"/>
    </location>
    <ligand>
        <name>FAD</name>
        <dbReference type="ChEBI" id="CHEBI:57692"/>
    </ligand>
</feature>
<feature type="binding site" evidence="1">
    <location>
        <begin position="270"/>
        <end position="284"/>
    </location>
    <ligand>
        <name>NAD(+)</name>
        <dbReference type="ChEBI" id="CHEBI:57540"/>
    </ligand>
</feature>
<feature type="binding site" evidence="1">
    <location>
        <position position="367"/>
    </location>
    <ligand>
        <name>FAD</name>
        <dbReference type="ChEBI" id="CHEBI:57692"/>
    </ligand>
</feature>
<proteinExistence type="inferred from homology"/>
<reference key="1">
    <citation type="journal article" date="2004" name="Proc. Natl. Acad. Sci. U.S.A.">
        <title>Complete genomes of two clinical Staphylococcus aureus strains: evidence for the rapid evolution of virulence and drug resistance.</title>
        <authorList>
            <person name="Holden M.T.G."/>
            <person name="Feil E.J."/>
            <person name="Lindsay J.A."/>
            <person name="Peacock S.J."/>
            <person name="Day N.P.J."/>
            <person name="Enright M.C."/>
            <person name="Foster T.J."/>
            <person name="Moore C.E."/>
            <person name="Hurst L."/>
            <person name="Atkin R."/>
            <person name="Barron A."/>
            <person name="Bason N."/>
            <person name="Bentley S.D."/>
            <person name="Chillingworth C."/>
            <person name="Chillingworth T."/>
            <person name="Churcher C."/>
            <person name="Clark L."/>
            <person name="Corton C."/>
            <person name="Cronin A."/>
            <person name="Doggett J."/>
            <person name="Dowd L."/>
            <person name="Feltwell T."/>
            <person name="Hance Z."/>
            <person name="Harris B."/>
            <person name="Hauser H."/>
            <person name="Holroyd S."/>
            <person name="Jagels K."/>
            <person name="James K.D."/>
            <person name="Lennard N."/>
            <person name="Line A."/>
            <person name="Mayes R."/>
            <person name="Moule S."/>
            <person name="Mungall K."/>
            <person name="Ormond D."/>
            <person name="Quail M.A."/>
            <person name="Rabbinowitsch E."/>
            <person name="Rutherford K.M."/>
            <person name="Sanders M."/>
            <person name="Sharp S."/>
            <person name="Simmonds M."/>
            <person name="Stevens K."/>
            <person name="Whitehead S."/>
            <person name="Barrell B.G."/>
            <person name="Spratt B.G."/>
            <person name="Parkhill J."/>
        </authorList>
    </citation>
    <scope>NUCLEOTIDE SEQUENCE [LARGE SCALE GENOMIC DNA]</scope>
    <source>
        <strain>MRSA252</strain>
    </source>
</reference>
<comment type="function">
    <text evidence="1">NAD-binding protein involved in the addition of a carboxymethylaminomethyl (cmnm) group at the wobble position (U34) of certain tRNAs, forming tRNA-cmnm(5)s(2)U34.</text>
</comment>
<comment type="cofactor">
    <cofactor evidence="1">
        <name>FAD</name>
        <dbReference type="ChEBI" id="CHEBI:57692"/>
    </cofactor>
</comment>
<comment type="subunit">
    <text evidence="1">Homodimer. Heterotetramer of two MnmE and two MnmG subunits.</text>
</comment>
<comment type="subcellular location">
    <subcellularLocation>
        <location evidence="1">Cytoplasm</location>
    </subcellularLocation>
</comment>
<comment type="similarity">
    <text evidence="1">Belongs to the MnmG family.</text>
</comment>
<keyword id="KW-0963">Cytoplasm</keyword>
<keyword id="KW-0274">FAD</keyword>
<keyword id="KW-0285">Flavoprotein</keyword>
<keyword id="KW-0520">NAD</keyword>
<keyword id="KW-0819">tRNA processing</keyword>
<dbReference type="EMBL" id="BX571856">
    <property type="protein sequence ID" value="CAG41769.1"/>
    <property type="molecule type" value="Genomic_DNA"/>
</dbReference>
<dbReference type="RefSeq" id="WP_000249657.1">
    <property type="nucleotide sequence ID" value="NC_002952.2"/>
</dbReference>
<dbReference type="SMR" id="Q6GD93"/>
<dbReference type="KEGG" id="sar:SAR2797"/>
<dbReference type="HOGENOM" id="CLU_007831_2_2_9"/>
<dbReference type="Proteomes" id="UP000000596">
    <property type="component" value="Chromosome"/>
</dbReference>
<dbReference type="GO" id="GO:0005829">
    <property type="term" value="C:cytosol"/>
    <property type="evidence" value="ECO:0007669"/>
    <property type="project" value="TreeGrafter"/>
</dbReference>
<dbReference type="GO" id="GO:0050660">
    <property type="term" value="F:flavin adenine dinucleotide binding"/>
    <property type="evidence" value="ECO:0007669"/>
    <property type="project" value="UniProtKB-UniRule"/>
</dbReference>
<dbReference type="GO" id="GO:0030488">
    <property type="term" value="P:tRNA methylation"/>
    <property type="evidence" value="ECO:0007669"/>
    <property type="project" value="TreeGrafter"/>
</dbReference>
<dbReference type="GO" id="GO:0002098">
    <property type="term" value="P:tRNA wobble uridine modification"/>
    <property type="evidence" value="ECO:0007669"/>
    <property type="project" value="InterPro"/>
</dbReference>
<dbReference type="FunFam" id="1.10.10.1800:FF:000001">
    <property type="entry name" value="tRNA uridine 5-carboxymethylaminomethyl modification enzyme MnmG"/>
    <property type="match status" value="1"/>
</dbReference>
<dbReference type="FunFam" id="1.10.150.570:FF:000001">
    <property type="entry name" value="tRNA uridine 5-carboxymethylaminomethyl modification enzyme MnmG"/>
    <property type="match status" value="1"/>
</dbReference>
<dbReference type="FunFam" id="3.50.50.60:FF:000002">
    <property type="entry name" value="tRNA uridine 5-carboxymethylaminomethyl modification enzyme MnmG"/>
    <property type="match status" value="1"/>
</dbReference>
<dbReference type="FunFam" id="3.50.50.60:FF:000063">
    <property type="entry name" value="tRNA uridine 5-carboxymethylaminomethyl modification enzyme MnmG"/>
    <property type="match status" value="1"/>
</dbReference>
<dbReference type="Gene3D" id="3.50.50.60">
    <property type="entry name" value="FAD/NAD(P)-binding domain"/>
    <property type="match status" value="2"/>
</dbReference>
<dbReference type="Gene3D" id="1.10.150.570">
    <property type="entry name" value="GidA associated domain, C-terminal subdomain"/>
    <property type="match status" value="1"/>
</dbReference>
<dbReference type="Gene3D" id="1.10.10.1800">
    <property type="entry name" value="tRNA uridine 5-carboxymethylaminomethyl modification enzyme MnmG/GidA"/>
    <property type="match status" value="1"/>
</dbReference>
<dbReference type="HAMAP" id="MF_00129">
    <property type="entry name" value="MnmG_GidA"/>
    <property type="match status" value="1"/>
</dbReference>
<dbReference type="InterPro" id="IPR036188">
    <property type="entry name" value="FAD/NAD-bd_sf"/>
</dbReference>
<dbReference type="InterPro" id="IPR049312">
    <property type="entry name" value="GIDA_C_N"/>
</dbReference>
<dbReference type="InterPro" id="IPR004416">
    <property type="entry name" value="MnmG"/>
</dbReference>
<dbReference type="InterPro" id="IPR002218">
    <property type="entry name" value="MnmG-rel"/>
</dbReference>
<dbReference type="InterPro" id="IPR020595">
    <property type="entry name" value="MnmG-rel_CS"/>
</dbReference>
<dbReference type="InterPro" id="IPR026904">
    <property type="entry name" value="MnmG_C"/>
</dbReference>
<dbReference type="InterPro" id="IPR047001">
    <property type="entry name" value="MnmG_C_subdom"/>
</dbReference>
<dbReference type="InterPro" id="IPR044920">
    <property type="entry name" value="MnmG_C_subdom_sf"/>
</dbReference>
<dbReference type="InterPro" id="IPR040131">
    <property type="entry name" value="MnmG_N"/>
</dbReference>
<dbReference type="NCBIfam" id="TIGR00136">
    <property type="entry name" value="mnmG_gidA"/>
    <property type="match status" value="1"/>
</dbReference>
<dbReference type="PANTHER" id="PTHR11806">
    <property type="entry name" value="GLUCOSE INHIBITED DIVISION PROTEIN A"/>
    <property type="match status" value="1"/>
</dbReference>
<dbReference type="PANTHER" id="PTHR11806:SF0">
    <property type="entry name" value="PROTEIN MTO1 HOMOLOG, MITOCHONDRIAL"/>
    <property type="match status" value="1"/>
</dbReference>
<dbReference type="Pfam" id="PF01134">
    <property type="entry name" value="GIDA"/>
    <property type="match status" value="1"/>
</dbReference>
<dbReference type="Pfam" id="PF21680">
    <property type="entry name" value="GIDA_C_1st"/>
    <property type="match status" value="1"/>
</dbReference>
<dbReference type="Pfam" id="PF13932">
    <property type="entry name" value="SAM_GIDA_C"/>
    <property type="match status" value="1"/>
</dbReference>
<dbReference type="PRINTS" id="PR00411">
    <property type="entry name" value="PNDRDTASEI"/>
</dbReference>
<dbReference type="SMART" id="SM01228">
    <property type="entry name" value="GIDA_assoc_3"/>
    <property type="match status" value="1"/>
</dbReference>
<dbReference type="SUPFAM" id="SSF51905">
    <property type="entry name" value="FAD/NAD(P)-binding domain"/>
    <property type="match status" value="1"/>
</dbReference>
<dbReference type="PROSITE" id="PS01280">
    <property type="entry name" value="GIDA_1"/>
    <property type="match status" value="1"/>
</dbReference>
<dbReference type="PROSITE" id="PS01281">
    <property type="entry name" value="GIDA_2"/>
    <property type="match status" value="1"/>
</dbReference>
<sequence length="625" mass="70116">MVQEYDVIVIGAGHAGVEAGLASARRGAKTLMLTINLDNIAFMPCNPSVGGPAKGIVVREIDALGGQMAKTIDKTHIQMRMLNTGKGPAVRALRAQADKVLYQQEMKRVIEDEENLHIMQGMVDELIIEDNEVKGVRTNIGTEYLSKAVIITTGTFLRGEIILGNMKYSSGPNHQLPSITLSDNLRELGFDIVRFKTGTPPRVNSKTIDYSKTEIQPGDDVGRAFSFETTEYILDQLPCWLTYTNAETHKVIDDNLHLSAMYSGMIKGTGPRYCPSIEDKFVRFNDKPRHQLFLEPEGRNTNEVYVQGLSTSLPEHVQRQMLETIPGLEKADMMRAGYAIEYDAIVPTQLWPTLETKMIKNLYTAGQINGTSGYEEAAGQGLMAGINAAGKVLNTGEKILSRSDAYIGVLIDDLVTKGTNEPYRLLTSRAEYRLLLRHDNADLRLTDMGYELGMISEERYARFNEKRQQIDAEIKRLSDIRIKPNEHTQAIIEQHGGSRLKDGILAIDLLRRPEMTYDIILEILEEEHQLNADVEEQVEIQTKYEGYINKSLQQVEKVKRMEEKKIPEDLDYSKIDSLATEAREKLSEVKPLNIAQASRISGVNPADISILLIYLEQGKLQRVSD</sequence>